<accession>Q88VI7</accession>
<accession>F9UQ17</accession>
<feature type="chain" id="PRO_0000094975" description="UPF0291 protein lp_2062">
    <location>
        <begin position="1"/>
        <end position="79"/>
    </location>
</feature>
<keyword id="KW-0963">Cytoplasm</keyword>
<keyword id="KW-1185">Reference proteome</keyword>
<proteinExistence type="inferred from homology"/>
<protein>
    <recommendedName>
        <fullName evidence="1">UPF0291 protein lp_2062</fullName>
    </recommendedName>
</protein>
<reference key="1">
    <citation type="journal article" date="2003" name="Proc. Natl. Acad. Sci. U.S.A.">
        <title>Complete genome sequence of Lactobacillus plantarum WCFS1.</title>
        <authorList>
            <person name="Kleerebezem M."/>
            <person name="Boekhorst J."/>
            <person name="van Kranenburg R."/>
            <person name="Molenaar D."/>
            <person name="Kuipers O.P."/>
            <person name="Leer R."/>
            <person name="Tarchini R."/>
            <person name="Peters S.A."/>
            <person name="Sandbrink H.M."/>
            <person name="Fiers M.W.E.J."/>
            <person name="Stiekema W."/>
            <person name="Klein Lankhorst R.M."/>
            <person name="Bron P.A."/>
            <person name="Hoffer S.M."/>
            <person name="Nierop Groot M.N."/>
            <person name="Kerkhoven R."/>
            <person name="De Vries M."/>
            <person name="Ursing B."/>
            <person name="De Vos W.M."/>
            <person name="Siezen R.J."/>
        </authorList>
    </citation>
    <scope>NUCLEOTIDE SEQUENCE [LARGE SCALE GENOMIC DNA]</scope>
    <source>
        <strain>ATCC BAA-793 / NCIMB 8826 / WCFS1</strain>
    </source>
</reference>
<reference key="2">
    <citation type="journal article" date="2012" name="J. Bacteriol.">
        <title>Complete resequencing and reannotation of the Lactobacillus plantarum WCFS1 genome.</title>
        <authorList>
            <person name="Siezen R.J."/>
            <person name="Francke C."/>
            <person name="Renckens B."/>
            <person name="Boekhorst J."/>
            <person name="Wels M."/>
            <person name="Kleerebezem M."/>
            <person name="van Hijum S.A."/>
        </authorList>
    </citation>
    <scope>NUCLEOTIDE SEQUENCE [LARGE SCALE GENOMIC DNA]</scope>
    <scope>GENOME REANNOTATION</scope>
    <source>
        <strain>ATCC BAA-793 / NCIMB 8826 / WCFS1</strain>
    </source>
</reference>
<sequence length="79" mass="9387">MISKELLARINELAHKAKAEGLTELEEAERQELRQKYLKEFRAGFRQQVEMLQVYDKDGKEVTPEKVRQVQRDRGLRDD</sequence>
<evidence type="ECO:0000255" key="1">
    <source>
        <dbReference type="HAMAP-Rule" id="MF_01103"/>
    </source>
</evidence>
<gene>
    <name type="ordered locus">lp_2062</name>
</gene>
<name>Y2062_LACPL</name>
<comment type="subcellular location">
    <subcellularLocation>
        <location evidence="1">Cytoplasm</location>
    </subcellularLocation>
</comment>
<comment type="similarity">
    <text evidence="1">Belongs to the UPF0291 family.</text>
</comment>
<organism>
    <name type="scientific">Lactiplantibacillus plantarum (strain ATCC BAA-793 / NCIMB 8826 / WCFS1)</name>
    <name type="common">Lactobacillus plantarum</name>
    <dbReference type="NCBI Taxonomy" id="220668"/>
    <lineage>
        <taxon>Bacteria</taxon>
        <taxon>Bacillati</taxon>
        <taxon>Bacillota</taxon>
        <taxon>Bacilli</taxon>
        <taxon>Lactobacillales</taxon>
        <taxon>Lactobacillaceae</taxon>
        <taxon>Lactiplantibacillus</taxon>
    </lineage>
</organism>
<dbReference type="EMBL" id="AL935263">
    <property type="protein sequence ID" value="CCC79306.1"/>
    <property type="molecule type" value="Genomic_DNA"/>
</dbReference>
<dbReference type="RefSeq" id="WP_003644501.1">
    <property type="nucleotide sequence ID" value="NC_004567.2"/>
</dbReference>
<dbReference type="RefSeq" id="YP_004889820.1">
    <property type="nucleotide sequence ID" value="NC_004567.2"/>
</dbReference>
<dbReference type="SMR" id="Q88VI7"/>
<dbReference type="STRING" id="220668.lp_2062"/>
<dbReference type="EnsemblBacteria" id="CCC79306">
    <property type="protein sequence ID" value="CCC79306"/>
    <property type="gene ID" value="lp_2062"/>
</dbReference>
<dbReference type="KEGG" id="lpl:lp_2062"/>
<dbReference type="PATRIC" id="fig|220668.9.peg.1747"/>
<dbReference type="eggNOG" id="COG4224">
    <property type="taxonomic scope" value="Bacteria"/>
</dbReference>
<dbReference type="HOGENOM" id="CLU_173137_0_1_9"/>
<dbReference type="OrthoDB" id="390105at2"/>
<dbReference type="PhylomeDB" id="Q88VI7"/>
<dbReference type="Proteomes" id="UP000000432">
    <property type="component" value="Chromosome"/>
</dbReference>
<dbReference type="GO" id="GO:0005737">
    <property type="term" value="C:cytoplasm"/>
    <property type="evidence" value="ECO:0007669"/>
    <property type="project" value="UniProtKB-SubCell"/>
</dbReference>
<dbReference type="Gene3D" id="1.10.287.540">
    <property type="entry name" value="Helix hairpin bin"/>
    <property type="match status" value="1"/>
</dbReference>
<dbReference type="HAMAP" id="MF_01103">
    <property type="entry name" value="UPF0291"/>
    <property type="match status" value="1"/>
</dbReference>
<dbReference type="InterPro" id="IPR009242">
    <property type="entry name" value="DUF896"/>
</dbReference>
<dbReference type="PANTHER" id="PTHR37300">
    <property type="entry name" value="UPF0291 PROTEIN CBO2609/CLC_2481"/>
    <property type="match status" value="1"/>
</dbReference>
<dbReference type="PANTHER" id="PTHR37300:SF1">
    <property type="entry name" value="UPF0291 PROTEIN YNZC"/>
    <property type="match status" value="1"/>
</dbReference>
<dbReference type="Pfam" id="PF05979">
    <property type="entry name" value="DUF896"/>
    <property type="match status" value="1"/>
</dbReference>
<dbReference type="SUPFAM" id="SSF158221">
    <property type="entry name" value="YnzC-like"/>
    <property type="match status" value="1"/>
</dbReference>